<keyword id="KW-1003">Cell membrane</keyword>
<keyword id="KW-0210">Decarboxylase</keyword>
<keyword id="KW-0285">Flavoprotein</keyword>
<keyword id="KW-0288">FMN</keyword>
<keyword id="KW-0456">Lyase</keyword>
<keyword id="KW-0464">Manganese</keyword>
<keyword id="KW-0472">Membrane</keyword>
<keyword id="KW-0479">Metal-binding</keyword>
<keyword id="KW-0831">Ubiquinone biosynthesis</keyword>
<organism>
    <name type="scientific">Escherichia coli O9:H4 (strain HS)</name>
    <dbReference type="NCBI Taxonomy" id="331112"/>
    <lineage>
        <taxon>Bacteria</taxon>
        <taxon>Pseudomonadati</taxon>
        <taxon>Pseudomonadota</taxon>
        <taxon>Gammaproteobacteria</taxon>
        <taxon>Enterobacterales</taxon>
        <taxon>Enterobacteriaceae</taxon>
        <taxon>Escherichia</taxon>
    </lineage>
</organism>
<protein>
    <recommendedName>
        <fullName evidence="1">3-octaprenyl-4-hydroxybenzoate carboxy-lyase</fullName>
        <ecNumber evidence="1">4.1.1.98</ecNumber>
    </recommendedName>
    <alternativeName>
        <fullName evidence="1">Polyprenyl p-hydroxybenzoate decarboxylase</fullName>
    </alternativeName>
</protein>
<proteinExistence type="inferred from homology"/>
<name>UBID_ECOHS</name>
<reference key="1">
    <citation type="journal article" date="2008" name="J. Bacteriol.">
        <title>The pangenome structure of Escherichia coli: comparative genomic analysis of E. coli commensal and pathogenic isolates.</title>
        <authorList>
            <person name="Rasko D.A."/>
            <person name="Rosovitz M.J."/>
            <person name="Myers G.S.A."/>
            <person name="Mongodin E.F."/>
            <person name="Fricke W.F."/>
            <person name="Gajer P."/>
            <person name="Crabtree J."/>
            <person name="Sebaihia M."/>
            <person name="Thomson N.R."/>
            <person name="Chaudhuri R."/>
            <person name="Henderson I.R."/>
            <person name="Sperandio V."/>
            <person name="Ravel J."/>
        </authorList>
    </citation>
    <scope>NUCLEOTIDE SEQUENCE [LARGE SCALE GENOMIC DNA]</scope>
    <source>
        <strain>HS</strain>
    </source>
</reference>
<feature type="chain" id="PRO_0000335866" description="3-octaprenyl-4-hydroxybenzoate carboxy-lyase">
    <location>
        <begin position="1"/>
        <end position="494"/>
    </location>
</feature>
<feature type="active site" description="Proton donor" evidence="1">
    <location>
        <position position="287"/>
    </location>
</feature>
<feature type="binding site" evidence="1">
    <location>
        <position position="172"/>
    </location>
    <ligand>
        <name>Mn(2+)</name>
        <dbReference type="ChEBI" id="CHEBI:29035"/>
    </ligand>
</feature>
<feature type="binding site" evidence="1">
    <location>
        <begin position="175"/>
        <end position="177"/>
    </location>
    <ligand>
        <name>prenylated FMN</name>
        <dbReference type="ChEBI" id="CHEBI:87746"/>
    </ligand>
</feature>
<feature type="binding site" evidence="1">
    <location>
        <begin position="189"/>
        <end position="191"/>
    </location>
    <ligand>
        <name>prenylated FMN</name>
        <dbReference type="ChEBI" id="CHEBI:87746"/>
    </ligand>
</feature>
<feature type="binding site" evidence="1">
    <location>
        <begin position="194"/>
        <end position="195"/>
    </location>
    <ligand>
        <name>prenylated FMN</name>
        <dbReference type="ChEBI" id="CHEBI:87746"/>
    </ligand>
</feature>
<feature type="binding site" evidence="1">
    <location>
        <position position="238"/>
    </location>
    <ligand>
        <name>Mn(2+)</name>
        <dbReference type="ChEBI" id="CHEBI:29035"/>
    </ligand>
</feature>
<dbReference type="EC" id="4.1.1.98" evidence="1"/>
<dbReference type="EMBL" id="CP000802">
    <property type="protein sequence ID" value="ABV08252.1"/>
    <property type="status" value="ALT_INIT"/>
    <property type="molecule type" value="Genomic_DNA"/>
</dbReference>
<dbReference type="SMR" id="A8A6U8"/>
<dbReference type="KEGG" id="ecx:EcHS_A4065"/>
<dbReference type="HOGENOM" id="CLU_023348_4_1_6"/>
<dbReference type="UniPathway" id="UPA00232"/>
<dbReference type="GO" id="GO:0005829">
    <property type="term" value="C:cytosol"/>
    <property type="evidence" value="ECO:0007669"/>
    <property type="project" value="TreeGrafter"/>
</dbReference>
<dbReference type="GO" id="GO:0005886">
    <property type="term" value="C:plasma membrane"/>
    <property type="evidence" value="ECO:0007669"/>
    <property type="project" value="UniProtKB-SubCell"/>
</dbReference>
<dbReference type="GO" id="GO:0008694">
    <property type="term" value="F:3-octaprenyl-4-hydroxybenzoate carboxy-lyase activity"/>
    <property type="evidence" value="ECO:0007669"/>
    <property type="project" value="UniProtKB-UniRule"/>
</dbReference>
<dbReference type="GO" id="GO:0046872">
    <property type="term" value="F:metal ion binding"/>
    <property type="evidence" value="ECO:0007669"/>
    <property type="project" value="UniProtKB-KW"/>
</dbReference>
<dbReference type="GO" id="GO:0006744">
    <property type="term" value="P:ubiquinone biosynthetic process"/>
    <property type="evidence" value="ECO:0007669"/>
    <property type="project" value="UniProtKB-UniRule"/>
</dbReference>
<dbReference type="FunFam" id="1.20.5.570:FF:000001">
    <property type="entry name" value="3-octaprenyl-4-hydroxybenzoate carboxy-lyase"/>
    <property type="match status" value="1"/>
</dbReference>
<dbReference type="FunFam" id="3.40.1670.10:FF:000001">
    <property type="entry name" value="3-octaprenyl-4-hydroxybenzoate carboxy-lyase"/>
    <property type="match status" value="1"/>
</dbReference>
<dbReference type="Gene3D" id="1.20.5.570">
    <property type="entry name" value="Single helix bin"/>
    <property type="match status" value="1"/>
</dbReference>
<dbReference type="Gene3D" id="3.40.1670.10">
    <property type="entry name" value="UbiD C-terminal domain-like"/>
    <property type="match status" value="1"/>
</dbReference>
<dbReference type="HAMAP" id="MF_01636">
    <property type="entry name" value="UbiD"/>
    <property type="match status" value="1"/>
</dbReference>
<dbReference type="InterPro" id="IPR002830">
    <property type="entry name" value="UbiD"/>
</dbReference>
<dbReference type="InterPro" id="IPR049381">
    <property type="entry name" value="UbiD-like_C"/>
</dbReference>
<dbReference type="InterPro" id="IPR049383">
    <property type="entry name" value="UbiD-like_N"/>
</dbReference>
<dbReference type="InterPro" id="IPR023677">
    <property type="entry name" value="UbiD_bacteria"/>
</dbReference>
<dbReference type="InterPro" id="IPR048304">
    <property type="entry name" value="UbiD_Rift_dom"/>
</dbReference>
<dbReference type="NCBIfam" id="NF008175">
    <property type="entry name" value="PRK10922.1"/>
    <property type="match status" value="1"/>
</dbReference>
<dbReference type="NCBIfam" id="TIGR00148">
    <property type="entry name" value="UbiD family decarboxylase"/>
    <property type="match status" value="1"/>
</dbReference>
<dbReference type="PANTHER" id="PTHR30108">
    <property type="entry name" value="3-OCTAPRENYL-4-HYDROXYBENZOATE CARBOXY-LYASE-RELATED"/>
    <property type="match status" value="1"/>
</dbReference>
<dbReference type="PANTHER" id="PTHR30108:SF17">
    <property type="entry name" value="FERULIC ACID DECARBOXYLASE 1"/>
    <property type="match status" value="1"/>
</dbReference>
<dbReference type="Pfam" id="PF01977">
    <property type="entry name" value="UbiD"/>
    <property type="match status" value="1"/>
</dbReference>
<dbReference type="Pfam" id="PF20696">
    <property type="entry name" value="UbiD_C"/>
    <property type="match status" value="1"/>
</dbReference>
<dbReference type="Pfam" id="PF20695">
    <property type="entry name" value="UbiD_N"/>
    <property type="match status" value="1"/>
</dbReference>
<dbReference type="SUPFAM" id="SSF50475">
    <property type="entry name" value="FMN-binding split barrel"/>
    <property type="match status" value="1"/>
</dbReference>
<dbReference type="SUPFAM" id="SSF143968">
    <property type="entry name" value="UbiD C-terminal domain-like"/>
    <property type="match status" value="1"/>
</dbReference>
<accession>A8A6U8</accession>
<gene>
    <name evidence="1" type="primary">ubiD</name>
    <name type="ordered locus">EcHS_A4065</name>
</gene>
<sequence>MKYNDLRDFLTLLEQQGELKRITLPVDPHLEITEIADRTLRAGGPALLFENPKGYSMPVLCNLFGTPKRVAMGMGQEDVSALREVGKLLAFLKEPEPPKGFRDLFDKLPQFKQVLNMPTKRLRGAPCQQKIVSGDDVDLNRIPIMTCWPEDAAPLITWGLTVTRGPHKERQNLGIYRQQLIGKNKLIMRWLSHRGGALDYQEWCAAHPGERFPVSVALGADPATILGAVTPVPDTLSEYAFAGLLRGTKTEVVKCISNDLEVPASAEIVLEGYIDPGEMAPEGPYGDHTGYYNEVDSFPVFTVTHITQREDAIYHSTYTGRPPDEPAVLGVALNEVFVPILQKQFPEIVDFYLPPEGCSYRLAVVTIKKQYAGHAKRVMMGVWSFLRQFMYTKFVIVCDDDVNARDWNDVIWAITTRMDPARDTVLVENTPIDYLDFASPVSGLGSKMGLDATNKWPGETQREWGRPIKKDPDVVAHIDAIWDELAIFNNGKSA</sequence>
<comment type="function">
    <text evidence="1">Catalyzes the decarboxylation of 3-octaprenyl-4-hydroxy benzoate to 2-octaprenylphenol, an intermediate step in ubiquinone biosynthesis.</text>
</comment>
<comment type="catalytic activity">
    <reaction evidence="1">
        <text>a 4-hydroxy-3-(all-trans-polyprenyl)benzoate + H(+) = a 2-(all-trans-polyprenyl)phenol + CO2</text>
        <dbReference type="Rhea" id="RHEA:41680"/>
        <dbReference type="Rhea" id="RHEA-COMP:9514"/>
        <dbReference type="Rhea" id="RHEA-COMP:9516"/>
        <dbReference type="ChEBI" id="CHEBI:1269"/>
        <dbReference type="ChEBI" id="CHEBI:15378"/>
        <dbReference type="ChEBI" id="CHEBI:16526"/>
        <dbReference type="ChEBI" id="CHEBI:78396"/>
        <dbReference type="EC" id="4.1.1.98"/>
    </reaction>
</comment>
<comment type="cofactor">
    <cofactor evidence="1">
        <name>prenylated FMN</name>
        <dbReference type="ChEBI" id="CHEBI:87746"/>
    </cofactor>
    <text evidence="1">Binds 1 prenylated FMN per subunit.</text>
</comment>
<comment type="cofactor">
    <cofactor evidence="1">
        <name>Mn(2+)</name>
        <dbReference type="ChEBI" id="CHEBI:29035"/>
    </cofactor>
</comment>
<comment type="pathway">
    <text evidence="1">Cofactor biosynthesis; ubiquinone biosynthesis.</text>
</comment>
<comment type="subunit">
    <text evidence="1">Homohexamer.</text>
</comment>
<comment type="subcellular location">
    <subcellularLocation>
        <location evidence="1">Cell membrane</location>
        <topology evidence="1">Peripheral membrane protein</topology>
    </subcellularLocation>
</comment>
<comment type="similarity">
    <text evidence="1">Belongs to the UbiD family.</text>
</comment>
<comment type="sequence caution" evidence="2">
    <conflict type="erroneous initiation">
        <sequence resource="EMBL-CDS" id="ABV08252"/>
    </conflict>
</comment>
<evidence type="ECO:0000255" key="1">
    <source>
        <dbReference type="HAMAP-Rule" id="MF_01636"/>
    </source>
</evidence>
<evidence type="ECO:0000305" key="2"/>